<gene>
    <name evidence="2" type="primary">trmB</name>
    <name type="ordered locus">M6_Spy1462</name>
</gene>
<organism>
    <name type="scientific">Streptococcus pyogenes serotype M6 (strain ATCC BAA-946 / MGAS10394)</name>
    <dbReference type="NCBI Taxonomy" id="286636"/>
    <lineage>
        <taxon>Bacteria</taxon>
        <taxon>Bacillati</taxon>
        <taxon>Bacillota</taxon>
        <taxon>Bacilli</taxon>
        <taxon>Lactobacillales</taxon>
        <taxon>Streptococcaceae</taxon>
        <taxon>Streptococcus</taxon>
    </lineage>
</organism>
<name>TRMB_STRP6</name>
<proteinExistence type="inferred from homology"/>
<protein>
    <recommendedName>
        <fullName evidence="2">tRNA (guanine-N(7)-)-methyltransferase</fullName>
        <ecNumber evidence="2">2.1.1.33</ecNumber>
    </recommendedName>
    <alternativeName>
        <fullName evidence="2">tRNA (guanine(46)-N(7))-methyltransferase</fullName>
    </alternativeName>
    <alternativeName>
        <fullName evidence="2">tRNA(m7G46)-methyltransferase</fullName>
    </alternativeName>
</protein>
<keyword id="KW-0489">Methyltransferase</keyword>
<keyword id="KW-0949">S-adenosyl-L-methionine</keyword>
<keyword id="KW-0808">Transferase</keyword>
<keyword id="KW-0819">tRNA processing</keyword>
<feature type="chain" id="PRO_0000171407" description="tRNA (guanine-N(7)-)-methyltransferase">
    <location>
        <begin position="1"/>
        <end position="211"/>
    </location>
</feature>
<feature type="region of interest" description="Interaction with RNA" evidence="2">
    <location>
        <begin position="124"/>
        <end position="129"/>
    </location>
</feature>
<feature type="active site" evidence="1">
    <location>
        <position position="118"/>
    </location>
</feature>
<feature type="binding site" evidence="2">
    <location>
        <position position="44"/>
    </location>
    <ligand>
        <name>S-adenosyl-L-methionine</name>
        <dbReference type="ChEBI" id="CHEBI:59789"/>
    </ligand>
</feature>
<feature type="binding site" evidence="2">
    <location>
        <position position="69"/>
    </location>
    <ligand>
        <name>S-adenosyl-L-methionine</name>
        <dbReference type="ChEBI" id="CHEBI:59789"/>
    </ligand>
</feature>
<feature type="binding site" evidence="2">
    <location>
        <position position="96"/>
    </location>
    <ligand>
        <name>S-adenosyl-L-methionine</name>
        <dbReference type="ChEBI" id="CHEBI:59789"/>
    </ligand>
</feature>
<feature type="binding site" evidence="2">
    <location>
        <position position="118"/>
    </location>
    <ligand>
        <name>S-adenosyl-L-methionine</name>
        <dbReference type="ChEBI" id="CHEBI:59789"/>
    </ligand>
</feature>
<feature type="binding site" evidence="2">
    <location>
        <position position="122"/>
    </location>
    <ligand>
        <name>substrate</name>
    </ligand>
</feature>
<feature type="binding site" evidence="2">
    <location>
        <position position="154"/>
    </location>
    <ligand>
        <name>substrate</name>
    </ligand>
</feature>
<feature type="binding site" evidence="2">
    <location>
        <begin position="191"/>
        <end position="194"/>
    </location>
    <ligand>
        <name>substrate</name>
    </ligand>
</feature>
<comment type="function">
    <text evidence="2">Catalyzes the formation of N(7)-methylguanine at position 46 (m7G46) in tRNA.</text>
</comment>
<comment type="catalytic activity">
    <reaction evidence="2">
        <text>guanosine(46) in tRNA + S-adenosyl-L-methionine = N(7)-methylguanosine(46) in tRNA + S-adenosyl-L-homocysteine</text>
        <dbReference type="Rhea" id="RHEA:42708"/>
        <dbReference type="Rhea" id="RHEA-COMP:10188"/>
        <dbReference type="Rhea" id="RHEA-COMP:10189"/>
        <dbReference type="ChEBI" id="CHEBI:57856"/>
        <dbReference type="ChEBI" id="CHEBI:59789"/>
        <dbReference type="ChEBI" id="CHEBI:74269"/>
        <dbReference type="ChEBI" id="CHEBI:74480"/>
        <dbReference type="EC" id="2.1.1.33"/>
    </reaction>
</comment>
<comment type="pathway">
    <text evidence="2">tRNA modification; N(7)-methylguanine-tRNA biosynthesis.</text>
</comment>
<comment type="similarity">
    <text evidence="2">Belongs to the class I-like SAM-binding methyltransferase superfamily. TrmB family.</text>
</comment>
<accession>Q5XAG6</accession>
<dbReference type="EC" id="2.1.1.33" evidence="2"/>
<dbReference type="EMBL" id="CP000003">
    <property type="protein sequence ID" value="AAT87597.1"/>
    <property type="molecule type" value="Genomic_DNA"/>
</dbReference>
<dbReference type="RefSeq" id="WP_011184863.1">
    <property type="nucleotide sequence ID" value="NC_006086.1"/>
</dbReference>
<dbReference type="SMR" id="Q5XAG6"/>
<dbReference type="KEGG" id="spa:M6_Spy1462"/>
<dbReference type="HOGENOM" id="CLU_050910_2_1_9"/>
<dbReference type="UniPathway" id="UPA00989"/>
<dbReference type="Proteomes" id="UP000001167">
    <property type="component" value="Chromosome"/>
</dbReference>
<dbReference type="GO" id="GO:0043527">
    <property type="term" value="C:tRNA methyltransferase complex"/>
    <property type="evidence" value="ECO:0007669"/>
    <property type="project" value="TreeGrafter"/>
</dbReference>
<dbReference type="GO" id="GO:0008176">
    <property type="term" value="F:tRNA (guanine(46)-N7)-methyltransferase activity"/>
    <property type="evidence" value="ECO:0007669"/>
    <property type="project" value="UniProtKB-UniRule"/>
</dbReference>
<dbReference type="CDD" id="cd02440">
    <property type="entry name" value="AdoMet_MTases"/>
    <property type="match status" value="1"/>
</dbReference>
<dbReference type="FunFam" id="3.40.50.150:FF:000035">
    <property type="entry name" value="tRNA (guanine-N(7)-)-methyltransferase"/>
    <property type="match status" value="1"/>
</dbReference>
<dbReference type="Gene3D" id="3.40.50.150">
    <property type="entry name" value="Vaccinia Virus protein VP39"/>
    <property type="match status" value="1"/>
</dbReference>
<dbReference type="HAMAP" id="MF_01057">
    <property type="entry name" value="tRNA_methyltr_TrmB"/>
    <property type="match status" value="1"/>
</dbReference>
<dbReference type="InterPro" id="IPR029063">
    <property type="entry name" value="SAM-dependent_MTases_sf"/>
</dbReference>
<dbReference type="InterPro" id="IPR003358">
    <property type="entry name" value="tRNA_(Gua-N-7)_MeTrfase_Trmb"/>
</dbReference>
<dbReference type="InterPro" id="IPR055361">
    <property type="entry name" value="tRNA_methyltr_TrmB_bact"/>
</dbReference>
<dbReference type="NCBIfam" id="NF001080">
    <property type="entry name" value="PRK00121.2-2"/>
    <property type="match status" value="1"/>
</dbReference>
<dbReference type="NCBIfam" id="TIGR00091">
    <property type="entry name" value="tRNA (guanosine(46)-N7)-methyltransferase TrmB"/>
    <property type="match status" value="1"/>
</dbReference>
<dbReference type="PANTHER" id="PTHR23417">
    <property type="entry name" value="3-DEOXY-D-MANNO-OCTULOSONIC-ACID TRANSFERASE/TRNA GUANINE-N 7 - -METHYLTRANSFERASE"/>
    <property type="match status" value="1"/>
</dbReference>
<dbReference type="PANTHER" id="PTHR23417:SF14">
    <property type="entry name" value="PENTACOTRIPEPTIDE-REPEAT REGION OF PRORP DOMAIN-CONTAINING PROTEIN"/>
    <property type="match status" value="1"/>
</dbReference>
<dbReference type="Pfam" id="PF02390">
    <property type="entry name" value="Methyltransf_4"/>
    <property type="match status" value="1"/>
</dbReference>
<dbReference type="SUPFAM" id="SSF53335">
    <property type="entry name" value="S-adenosyl-L-methionine-dependent methyltransferases"/>
    <property type="match status" value="1"/>
</dbReference>
<dbReference type="PROSITE" id="PS51625">
    <property type="entry name" value="SAM_MT_TRMB"/>
    <property type="match status" value="1"/>
</dbReference>
<sequence length="211" mass="24445">MRVRKRKGAEEHLANNPHYVILNPEDAKGRWHDVFGNDRPIHIEVGSGKGGFITGMALKNPDINYIGIDIQLSVLSYALDKVLASEVSNVKLLRVDGSSLTNYFEDGEVDMMYLNFSDPWPKTKHEKRRLTYKDFLDTYKRILPEHGEIHFKTDNRGLFEYSLASFSQYGMTLRQIWLDLHASNYEGNVMTEYEEKFSNKGQVIYRVEANF</sequence>
<evidence type="ECO:0000250" key="1"/>
<evidence type="ECO:0000255" key="2">
    <source>
        <dbReference type="HAMAP-Rule" id="MF_01057"/>
    </source>
</evidence>
<reference key="1">
    <citation type="journal article" date="2004" name="J. Infect. Dis.">
        <title>Progress toward characterization of the group A Streptococcus metagenome: complete genome sequence of a macrolide-resistant serotype M6 strain.</title>
        <authorList>
            <person name="Banks D.J."/>
            <person name="Porcella S.F."/>
            <person name="Barbian K.D."/>
            <person name="Beres S.B."/>
            <person name="Philips L.E."/>
            <person name="Voyich J.M."/>
            <person name="DeLeo F.R."/>
            <person name="Martin J.M."/>
            <person name="Somerville G.A."/>
            <person name="Musser J.M."/>
        </authorList>
    </citation>
    <scope>NUCLEOTIDE SEQUENCE [LARGE SCALE GENOMIC DNA]</scope>
    <source>
        <strain>ATCC BAA-946 / MGAS10394</strain>
    </source>
</reference>